<name>PGK_ECOL5</name>
<evidence type="ECO:0000255" key="1">
    <source>
        <dbReference type="HAMAP-Rule" id="MF_00145"/>
    </source>
</evidence>
<organism>
    <name type="scientific">Escherichia coli O6:K15:H31 (strain 536 / UPEC)</name>
    <dbReference type="NCBI Taxonomy" id="362663"/>
    <lineage>
        <taxon>Bacteria</taxon>
        <taxon>Pseudomonadati</taxon>
        <taxon>Pseudomonadota</taxon>
        <taxon>Gammaproteobacteria</taxon>
        <taxon>Enterobacterales</taxon>
        <taxon>Enterobacteriaceae</taxon>
        <taxon>Escherichia</taxon>
    </lineage>
</organism>
<accession>Q0TDT0</accession>
<proteinExistence type="inferred from homology"/>
<gene>
    <name evidence="1" type="primary">pgk</name>
    <name type="ordered locus">ECP_2915</name>
</gene>
<sequence>MSVIKMTDLDLAGKRVFIRADLNVPVKDGKVTSDARIRASLPTIELALKQGAKVMVTSHLGRPTEGEYNEEFSLLPVVNYLKDKLSNPVRLVKDYLDGVDVAEGELVVLENVRFNKGEKKDDETLSKKYAALCDVFVMDAFGTAHRAQASTHGIGKFADVACAGPLLAAELDALGKALKEPARPMVAIVGGSKVSTKLTVLDSLSKIADQLIVGGGIANTFIAAQGHDVGKSLYEADLVDEAKRLLTTCNIPVPSDVRVATEFSETAPATLKSVNDVKADEQILDIGDASAQELAEILKNAKTILWNGPVGVFEFPNFRKGTEIVANAIADSEAFSIAGGGDTLAAIDLFGIADKISYISTGGGAFLEFVEGKVLPAVAMLEERAKK</sequence>
<reference key="1">
    <citation type="journal article" date="2006" name="Mol. Microbiol.">
        <title>Role of pathogenicity island-associated integrases in the genome plasticity of uropathogenic Escherichia coli strain 536.</title>
        <authorList>
            <person name="Hochhut B."/>
            <person name="Wilde C."/>
            <person name="Balling G."/>
            <person name="Middendorf B."/>
            <person name="Dobrindt U."/>
            <person name="Brzuszkiewicz E."/>
            <person name="Gottschalk G."/>
            <person name="Carniel E."/>
            <person name="Hacker J."/>
        </authorList>
    </citation>
    <scope>NUCLEOTIDE SEQUENCE [LARGE SCALE GENOMIC DNA]</scope>
    <source>
        <strain>536 / UPEC</strain>
    </source>
</reference>
<protein>
    <recommendedName>
        <fullName evidence="1">Phosphoglycerate kinase</fullName>
        <ecNumber evidence="1">2.7.2.3</ecNumber>
    </recommendedName>
</protein>
<keyword id="KW-0007">Acetylation</keyword>
<keyword id="KW-0067">ATP-binding</keyword>
<keyword id="KW-0963">Cytoplasm</keyword>
<keyword id="KW-0324">Glycolysis</keyword>
<keyword id="KW-0418">Kinase</keyword>
<keyword id="KW-0547">Nucleotide-binding</keyword>
<keyword id="KW-0808">Transferase</keyword>
<feature type="chain" id="PRO_1000057985" description="Phosphoglycerate kinase">
    <location>
        <begin position="1"/>
        <end position="387"/>
    </location>
</feature>
<feature type="binding site" evidence="1">
    <location>
        <begin position="21"/>
        <end position="23"/>
    </location>
    <ligand>
        <name>substrate</name>
    </ligand>
</feature>
<feature type="binding site" evidence="1">
    <location>
        <position position="36"/>
    </location>
    <ligand>
        <name>substrate</name>
    </ligand>
</feature>
<feature type="binding site" evidence="1">
    <location>
        <begin position="59"/>
        <end position="62"/>
    </location>
    <ligand>
        <name>substrate</name>
    </ligand>
</feature>
<feature type="binding site" evidence="1">
    <location>
        <position position="113"/>
    </location>
    <ligand>
        <name>substrate</name>
    </ligand>
</feature>
<feature type="binding site" evidence="1">
    <location>
        <position position="146"/>
    </location>
    <ligand>
        <name>substrate</name>
    </ligand>
</feature>
<feature type="binding site" evidence="1">
    <location>
        <position position="197"/>
    </location>
    <ligand>
        <name>ATP</name>
        <dbReference type="ChEBI" id="CHEBI:30616"/>
    </ligand>
</feature>
<feature type="binding site" evidence="1">
    <location>
        <position position="314"/>
    </location>
    <ligand>
        <name>ATP</name>
        <dbReference type="ChEBI" id="CHEBI:30616"/>
    </ligand>
</feature>
<feature type="binding site" evidence="1">
    <location>
        <begin position="340"/>
        <end position="343"/>
    </location>
    <ligand>
        <name>ATP</name>
        <dbReference type="ChEBI" id="CHEBI:30616"/>
    </ligand>
</feature>
<feature type="modified residue" description="N6-acetyllysine" evidence="1">
    <location>
        <position position="84"/>
    </location>
</feature>
<dbReference type="EC" id="2.7.2.3" evidence="1"/>
<dbReference type="EMBL" id="CP000247">
    <property type="protein sequence ID" value="ABG70899.1"/>
    <property type="molecule type" value="Genomic_DNA"/>
</dbReference>
<dbReference type="RefSeq" id="WP_000111269.1">
    <property type="nucleotide sequence ID" value="NC_008253.1"/>
</dbReference>
<dbReference type="SMR" id="Q0TDT0"/>
<dbReference type="GeneID" id="89517738"/>
<dbReference type="KEGG" id="ecp:ECP_2915"/>
<dbReference type="HOGENOM" id="CLU_025427_0_2_6"/>
<dbReference type="UniPathway" id="UPA00109">
    <property type="reaction ID" value="UER00185"/>
</dbReference>
<dbReference type="Proteomes" id="UP000009182">
    <property type="component" value="Chromosome"/>
</dbReference>
<dbReference type="GO" id="GO:0005829">
    <property type="term" value="C:cytosol"/>
    <property type="evidence" value="ECO:0007669"/>
    <property type="project" value="TreeGrafter"/>
</dbReference>
<dbReference type="GO" id="GO:0043531">
    <property type="term" value="F:ADP binding"/>
    <property type="evidence" value="ECO:0007669"/>
    <property type="project" value="TreeGrafter"/>
</dbReference>
<dbReference type="GO" id="GO:0005524">
    <property type="term" value="F:ATP binding"/>
    <property type="evidence" value="ECO:0007669"/>
    <property type="project" value="UniProtKB-KW"/>
</dbReference>
<dbReference type="GO" id="GO:0004618">
    <property type="term" value="F:phosphoglycerate kinase activity"/>
    <property type="evidence" value="ECO:0007669"/>
    <property type="project" value="UniProtKB-UniRule"/>
</dbReference>
<dbReference type="GO" id="GO:0006094">
    <property type="term" value="P:gluconeogenesis"/>
    <property type="evidence" value="ECO:0007669"/>
    <property type="project" value="TreeGrafter"/>
</dbReference>
<dbReference type="GO" id="GO:0006096">
    <property type="term" value="P:glycolytic process"/>
    <property type="evidence" value="ECO:0007669"/>
    <property type="project" value="UniProtKB-UniRule"/>
</dbReference>
<dbReference type="CDD" id="cd00318">
    <property type="entry name" value="Phosphoglycerate_kinase"/>
    <property type="match status" value="1"/>
</dbReference>
<dbReference type="FunFam" id="3.40.50.1260:FF:000001">
    <property type="entry name" value="Phosphoglycerate kinase"/>
    <property type="match status" value="1"/>
</dbReference>
<dbReference type="FunFam" id="3.40.50.1260:FF:000002">
    <property type="entry name" value="Phosphoglycerate kinase"/>
    <property type="match status" value="1"/>
</dbReference>
<dbReference type="Gene3D" id="3.40.50.1260">
    <property type="entry name" value="Phosphoglycerate kinase, N-terminal domain"/>
    <property type="match status" value="2"/>
</dbReference>
<dbReference type="HAMAP" id="MF_00145">
    <property type="entry name" value="Phosphoglyc_kinase"/>
    <property type="match status" value="1"/>
</dbReference>
<dbReference type="InterPro" id="IPR001576">
    <property type="entry name" value="Phosphoglycerate_kinase"/>
</dbReference>
<dbReference type="InterPro" id="IPR015911">
    <property type="entry name" value="Phosphoglycerate_kinase_CS"/>
</dbReference>
<dbReference type="InterPro" id="IPR015824">
    <property type="entry name" value="Phosphoglycerate_kinase_N"/>
</dbReference>
<dbReference type="InterPro" id="IPR036043">
    <property type="entry name" value="Phosphoglycerate_kinase_sf"/>
</dbReference>
<dbReference type="PANTHER" id="PTHR11406">
    <property type="entry name" value="PHOSPHOGLYCERATE KINASE"/>
    <property type="match status" value="1"/>
</dbReference>
<dbReference type="PANTHER" id="PTHR11406:SF23">
    <property type="entry name" value="PHOSPHOGLYCERATE KINASE 1, CHLOROPLASTIC-RELATED"/>
    <property type="match status" value="1"/>
</dbReference>
<dbReference type="Pfam" id="PF00162">
    <property type="entry name" value="PGK"/>
    <property type="match status" value="1"/>
</dbReference>
<dbReference type="PIRSF" id="PIRSF000724">
    <property type="entry name" value="Pgk"/>
    <property type="match status" value="1"/>
</dbReference>
<dbReference type="PRINTS" id="PR00477">
    <property type="entry name" value="PHGLYCKINASE"/>
</dbReference>
<dbReference type="SUPFAM" id="SSF53748">
    <property type="entry name" value="Phosphoglycerate kinase"/>
    <property type="match status" value="1"/>
</dbReference>
<dbReference type="PROSITE" id="PS00111">
    <property type="entry name" value="PGLYCERATE_KINASE"/>
    <property type="match status" value="1"/>
</dbReference>
<comment type="catalytic activity">
    <reaction evidence="1">
        <text>(2R)-3-phosphoglycerate + ATP = (2R)-3-phospho-glyceroyl phosphate + ADP</text>
        <dbReference type="Rhea" id="RHEA:14801"/>
        <dbReference type="ChEBI" id="CHEBI:30616"/>
        <dbReference type="ChEBI" id="CHEBI:57604"/>
        <dbReference type="ChEBI" id="CHEBI:58272"/>
        <dbReference type="ChEBI" id="CHEBI:456216"/>
        <dbReference type="EC" id="2.7.2.3"/>
    </reaction>
</comment>
<comment type="pathway">
    <text evidence="1">Carbohydrate degradation; glycolysis; pyruvate from D-glyceraldehyde 3-phosphate: step 2/5.</text>
</comment>
<comment type="subunit">
    <text evidence="1">Monomer.</text>
</comment>
<comment type="subcellular location">
    <subcellularLocation>
        <location evidence="1">Cytoplasm</location>
    </subcellularLocation>
</comment>
<comment type="similarity">
    <text evidence="1">Belongs to the phosphoglycerate kinase family.</text>
</comment>